<accession>B4TGH7</accession>
<dbReference type="EMBL" id="CP001120">
    <property type="protein sequence ID" value="ACF66108.1"/>
    <property type="molecule type" value="Genomic_DNA"/>
</dbReference>
<dbReference type="RefSeq" id="WP_001229266.1">
    <property type="nucleotide sequence ID" value="NC_011083.1"/>
</dbReference>
<dbReference type="SMR" id="B4TGH7"/>
<dbReference type="GeneID" id="92828695"/>
<dbReference type="KEGG" id="seh:SeHA_C1467"/>
<dbReference type="HOGENOM" id="CLU_105066_1_3_6"/>
<dbReference type="Proteomes" id="UP000001866">
    <property type="component" value="Chromosome"/>
</dbReference>
<dbReference type="GO" id="GO:0005829">
    <property type="term" value="C:cytosol"/>
    <property type="evidence" value="ECO:0007669"/>
    <property type="project" value="TreeGrafter"/>
</dbReference>
<dbReference type="GO" id="GO:0003677">
    <property type="term" value="F:DNA binding"/>
    <property type="evidence" value="ECO:0007669"/>
    <property type="project" value="UniProtKB-UniRule"/>
</dbReference>
<dbReference type="GO" id="GO:0030527">
    <property type="term" value="F:structural constituent of chromatin"/>
    <property type="evidence" value="ECO:0007669"/>
    <property type="project" value="InterPro"/>
</dbReference>
<dbReference type="GO" id="GO:0006310">
    <property type="term" value="P:DNA recombination"/>
    <property type="evidence" value="ECO:0007669"/>
    <property type="project" value="UniProtKB-UniRule"/>
</dbReference>
<dbReference type="GO" id="GO:0009893">
    <property type="term" value="P:positive regulation of metabolic process"/>
    <property type="evidence" value="ECO:0007669"/>
    <property type="project" value="UniProtKB-ARBA"/>
</dbReference>
<dbReference type="GO" id="GO:0006355">
    <property type="term" value="P:regulation of DNA-templated transcription"/>
    <property type="evidence" value="ECO:0007669"/>
    <property type="project" value="UniProtKB-UniRule"/>
</dbReference>
<dbReference type="GO" id="GO:0006417">
    <property type="term" value="P:regulation of translation"/>
    <property type="evidence" value="ECO:0007669"/>
    <property type="project" value="UniProtKB-UniRule"/>
</dbReference>
<dbReference type="CDD" id="cd13835">
    <property type="entry name" value="IHF_A"/>
    <property type="match status" value="1"/>
</dbReference>
<dbReference type="FunFam" id="4.10.520.10:FF:000002">
    <property type="entry name" value="Integration host factor subunit alpha"/>
    <property type="match status" value="1"/>
</dbReference>
<dbReference type="Gene3D" id="4.10.520.10">
    <property type="entry name" value="IHF-like DNA-binding proteins"/>
    <property type="match status" value="1"/>
</dbReference>
<dbReference type="HAMAP" id="MF_00380">
    <property type="entry name" value="IHF_alpha"/>
    <property type="match status" value="1"/>
</dbReference>
<dbReference type="InterPro" id="IPR000119">
    <property type="entry name" value="Hist_DNA-bd"/>
</dbReference>
<dbReference type="InterPro" id="IPR020816">
    <property type="entry name" value="Histone-like_DNA-bd_CS"/>
</dbReference>
<dbReference type="InterPro" id="IPR010992">
    <property type="entry name" value="IHF-like_DNA-bd_dom_sf"/>
</dbReference>
<dbReference type="InterPro" id="IPR005684">
    <property type="entry name" value="IHF_alpha"/>
</dbReference>
<dbReference type="NCBIfam" id="TIGR00987">
    <property type="entry name" value="himA"/>
    <property type="match status" value="1"/>
</dbReference>
<dbReference type="NCBIfam" id="NF001401">
    <property type="entry name" value="PRK00285.1"/>
    <property type="match status" value="1"/>
</dbReference>
<dbReference type="PANTHER" id="PTHR33175">
    <property type="entry name" value="DNA-BINDING PROTEIN HU"/>
    <property type="match status" value="1"/>
</dbReference>
<dbReference type="PANTHER" id="PTHR33175:SF2">
    <property type="entry name" value="INTEGRATION HOST FACTOR SUBUNIT ALPHA"/>
    <property type="match status" value="1"/>
</dbReference>
<dbReference type="Pfam" id="PF00216">
    <property type="entry name" value="Bac_DNA_binding"/>
    <property type="match status" value="1"/>
</dbReference>
<dbReference type="PRINTS" id="PR01727">
    <property type="entry name" value="DNABINDINGHU"/>
</dbReference>
<dbReference type="SMART" id="SM00411">
    <property type="entry name" value="BHL"/>
    <property type="match status" value="1"/>
</dbReference>
<dbReference type="SUPFAM" id="SSF47729">
    <property type="entry name" value="IHF-like DNA-binding proteins"/>
    <property type="match status" value="1"/>
</dbReference>
<dbReference type="PROSITE" id="PS00045">
    <property type="entry name" value="HISTONE_LIKE"/>
    <property type="match status" value="1"/>
</dbReference>
<sequence length="99" mass="11368">MALTKAEMSEYLFDKLGLSKRDAKELVELFFEEIRRALENGEQVKLSGFGNFDLRDKNQRPGRNPKTGEDIPITARRVVTFRPGQKLKSRVENASPKEE</sequence>
<evidence type="ECO:0000255" key="1">
    <source>
        <dbReference type="HAMAP-Rule" id="MF_00380"/>
    </source>
</evidence>
<evidence type="ECO:0000256" key="2">
    <source>
        <dbReference type="SAM" id="MobiDB-lite"/>
    </source>
</evidence>
<protein>
    <recommendedName>
        <fullName evidence="1">Integration host factor subunit alpha</fullName>
        <shortName evidence="1">IHF-alpha</shortName>
    </recommendedName>
</protein>
<organism>
    <name type="scientific">Salmonella heidelberg (strain SL476)</name>
    <dbReference type="NCBI Taxonomy" id="454169"/>
    <lineage>
        <taxon>Bacteria</taxon>
        <taxon>Pseudomonadati</taxon>
        <taxon>Pseudomonadota</taxon>
        <taxon>Gammaproteobacteria</taxon>
        <taxon>Enterobacterales</taxon>
        <taxon>Enterobacteriaceae</taxon>
        <taxon>Salmonella</taxon>
    </lineage>
</organism>
<name>IHFA_SALHS</name>
<keyword id="KW-0233">DNA recombination</keyword>
<keyword id="KW-0238">DNA-binding</keyword>
<keyword id="KW-0804">Transcription</keyword>
<keyword id="KW-0805">Transcription regulation</keyword>
<keyword id="KW-0810">Translation regulation</keyword>
<gene>
    <name evidence="1" type="primary">ihfA</name>
    <name evidence="1" type="synonym">himA</name>
    <name type="ordered locus">SeHA_C1467</name>
</gene>
<reference key="1">
    <citation type="journal article" date="2011" name="J. Bacteriol.">
        <title>Comparative genomics of 28 Salmonella enterica isolates: evidence for CRISPR-mediated adaptive sublineage evolution.</title>
        <authorList>
            <person name="Fricke W.F."/>
            <person name="Mammel M.K."/>
            <person name="McDermott P.F."/>
            <person name="Tartera C."/>
            <person name="White D.G."/>
            <person name="Leclerc J.E."/>
            <person name="Ravel J."/>
            <person name="Cebula T.A."/>
        </authorList>
    </citation>
    <scope>NUCLEOTIDE SEQUENCE [LARGE SCALE GENOMIC DNA]</scope>
    <source>
        <strain>SL476</strain>
    </source>
</reference>
<proteinExistence type="inferred from homology"/>
<feature type="chain" id="PRO_1000122163" description="Integration host factor subunit alpha">
    <location>
        <begin position="1"/>
        <end position="99"/>
    </location>
</feature>
<feature type="region of interest" description="Disordered" evidence="2">
    <location>
        <begin position="49"/>
        <end position="75"/>
    </location>
</feature>
<comment type="function">
    <text evidence="1">This protein is one of the two subunits of integration host factor, a specific DNA-binding protein that functions in genetic recombination as well as in transcriptional and translational control.</text>
</comment>
<comment type="subunit">
    <text evidence="1">Heterodimer of an alpha and a beta chain.</text>
</comment>
<comment type="similarity">
    <text evidence="1">Belongs to the bacterial histone-like protein family.</text>
</comment>